<evidence type="ECO:0000250" key="1">
    <source>
        <dbReference type="UniProtKB" id="Q9BQ65"/>
    </source>
</evidence>
<evidence type="ECO:0000255" key="2">
    <source>
        <dbReference type="HAMAP-Rule" id="MF_03040"/>
    </source>
</evidence>
<evidence type="ECO:0000256" key="3">
    <source>
        <dbReference type="SAM" id="MobiDB-lite"/>
    </source>
</evidence>
<evidence type="ECO:0000269" key="4">
    <source>
    </source>
</evidence>
<evidence type="ECO:0000269" key="5">
    <source>
    </source>
</evidence>
<evidence type="ECO:0000303" key="6">
    <source>
    </source>
</evidence>
<evidence type="ECO:0000305" key="7"/>
<evidence type="ECO:0000305" key="8">
    <source>
    </source>
</evidence>
<gene>
    <name evidence="2" type="primary">usb1</name>
    <name evidence="6" type="synonym">mnp1</name>
    <name type="ORF">SPAC23C11.10</name>
</gene>
<reference key="1">
    <citation type="journal article" date="2002" name="Nature">
        <title>The genome sequence of Schizosaccharomyces pombe.</title>
        <authorList>
            <person name="Wood V."/>
            <person name="Gwilliam R."/>
            <person name="Rajandream M.A."/>
            <person name="Lyne M.H."/>
            <person name="Lyne R."/>
            <person name="Stewart A."/>
            <person name="Sgouros J.G."/>
            <person name="Peat N."/>
            <person name="Hayles J."/>
            <person name="Baker S.G."/>
            <person name="Basham D."/>
            <person name="Bowman S."/>
            <person name="Brooks K."/>
            <person name="Brown D."/>
            <person name="Brown S."/>
            <person name="Chillingworth T."/>
            <person name="Churcher C.M."/>
            <person name="Collins M."/>
            <person name="Connor R."/>
            <person name="Cronin A."/>
            <person name="Davis P."/>
            <person name="Feltwell T."/>
            <person name="Fraser A."/>
            <person name="Gentles S."/>
            <person name="Goble A."/>
            <person name="Hamlin N."/>
            <person name="Harris D.E."/>
            <person name="Hidalgo J."/>
            <person name="Hodgson G."/>
            <person name="Holroyd S."/>
            <person name="Hornsby T."/>
            <person name="Howarth S."/>
            <person name="Huckle E.J."/>
            <person name="Hunt S."/>
            <person name="Jagels K."/>
            <person name="James K.D."/>
            <person name="Jones L."/>
            <person name="Jones M."/>
            <person name="Leather S."/>
            <person name="McDonald S."/>
            <person name="McLean J."/>
            <person name="Mooney P."/>
            <person name="Moule S."/>
            <person name="Mungall K.L."/>
            <person name="Murphy L.D."/>
            <person name="Niblett D."/>
            <person name="Odell C."/>
            <person name="Oliver K."/>
            <person name="O'Neil S."/>
            <person name="Pearson D."/>
            <person name="Quail M.A."/>
            <person name="Rabbinowitsch E."/>
            <person name="Rutherford K.M."/>
            <person name="Rutter S."/>
            <person name="Saunders D."/>
            <person name="Seeger K."/>
            <person name="Sharp S."/>
            <person name="Skelton J."/>
            <person name="Simmonds M.N."/>
            <person name="Squares R."/>
            <person name="Squares S."/>
            <person name="Stevens K."/>
            <person name="Taylor K."/>
            <person name="Taylor R.G."/>
            <person name="Tivey A."/>
            <person name="Walsh S.V."/>
            <person name="Warren T."/>
            <person name="Whitehead S."/>
            <person name="Woodward J.R."/>
            <person name="Volckaert G."/>
            <person name="Aert R."/>
            <person name="Robben J."/>
            <person name="Grymonprez B."/>
            <person name="Weltjens I."/>
            <person name="Vanstreels E."/>
            <person name="Rieger M."/>
            <person name="Schaefer M."/>
            <person name="Mueller-Auer S."/>
            <person name="Gabel C."/>
            <person name="Fuchs M."/>
            <person name="Duesterhoeft A."/>
            <person name="Fritzc C."/>
            <person name="Holzer E."/>
            <person name="Moestl D."/>
            <person name="Hilbert H."/>
            <person name="Borzym K."/>
            <person name="Langer I."/>
            <person name="Beck A."/>
            <person name="Lehrach H."/>
            <person name="Reinhardt R."/>
            <person name="Pohl T.M."/>
            <person name="Eger P."/>
            <person name="Zimmermann W."/>
            <person name="Wedler H."/>
            <person name="Wambutt R."/>
            <person name="Purnelle B."/>
            <person name="Goffeau A."/>
            <person name="Cadieu E."/>
            <person name="Dreano S."/>
            <person name="Gloux S."/>
            <person name="Lelaure V."/>
            <person name="Mottier S."/>
            <person name="Galibert F."/>
            <person name="Aves S.J."/>
            <person name="Xiang Z."/>
            <person name="Hunt C."/>
            <person name="Moore K."/>
            <person name="Hurst S.M."/>
            <person name="Lucas M."/>
            <person name="Rochet M."/>
            <person name="Gaillardin C."/>
            <person name="Tallada V.A."/>
            <person name="Garzon A."/>
            <person name="Thode G."/>
            <person name="Daga R.R."/>
            <person name="Cruzado L."/>
            <person name="Jimenez J."/>
            <person name="Sanchez M."/>
            <person name="del Rey F."/>
            <person name="Benito J."/>
            <person name="Dominguez A."/>
            <person name="Revuelta J.L."/>
            <person name="Moreno S."/>
            <person name="Armstrong J."/>
            <person name="Forsburg S.L."/>
            <person name="Cerutti L."/>
            <person name="Lowe T."/>
            <person name="McCombie W.R."/>
            <person name="Paulsen I."/>
            <person name="Potashkin J."/>
            <person name="Shpakovski G.V."/>
            <person name="Ussery D."/>
            <person name="Barrell B.G."/>
            <person name="Nurse P."/>
        </authorList>
    </citation>
    <scope>NUCLEOTIDE SEQUENCE [LARGE SCALE GENOMIC DNA]</scope>
    <source>
        <strain>972 / ATCC 24843</strain>
    </source>
</reference>
<reference key="2">
    <citation type="journal article" date="2012" name="Cell Rep.">
        <title>Mpn1, mutated in poikiloderma with neutropenia protein 1, is a conserved 3'-to-5' RNA exonuclease processing U6 small nuclear RNA.</title>
        <authorList>
            <person name="Shchepachev V."/>
            <person name="Wischnewski H."/>
            <person name="Missiaglia E."/>
            <person name="Soneson C."/>
            <person name="Azzalin C.M."/>
        </authorList>
    </citation>
    <scope>FUNCTION</scope>
    <scope>MUTAGENESIS OF HIS-109 AND HIS-199</scope>
    <scope>DISRUPTION PHENOTYPE</scope>
    <scope>SUBCELLULAR LOCATION</scope>
</reference>
<reference key="3">
    <citation type="journal article" date="2015" name="FEBS Lett.">
        <title>Human Mpn1 promotes post-transcriptional processing and stability of U6atac.</title>
        <authorList>
            <person name="Shchepachev V."/>
            <person name="Wischnewski H."/>
            <person name="Soneson C."/>
            <person name="Arnold A.W."/>
            <person name="Azzalin C.M."/>
        </authorList>
    </citation>
    <scope>FUNCTION</scope>
    <scope>CATALYTIC ACTIVITY</scope>
</reference>
<proteinExistence type="evidence at protein level"/>
<feature type="chain" id="PRO_0000116673" description="U6 snRNA phosphodiesterase 1">
    <location>
        <begin position="1"/>
        <end position="265"/>
    </location>
</feature>
<feature type="region of interest" description="Disordered" evidence="3">
    <location>
        <begin position="1"/>
        <end position="22"/>
    </location>
</feature>
<feature type="active site" description="Proton acceptor" evidence="2">
    <location>
        <position position="109"/>
    </location>
</feature>
<feature type="active site" description="Proton donor" evidence="2">
    <location>
        <position position="199"/>
    </location>
</feature>
<feature type="binding site" evidence="1">
    <location>
        <begin position="109"/>
        <end position="111"/>
    </location>
    <ligand>
        <name>AMP</name>
        <dbReference type="ChEBI" id="CHEBI:456215"/>
    </ligand>
</feature>
<feature type="binding site" evidence="1">
    <location>
        <begin position="195"/>
        <end position="201"/>
    </location>
    <ligand>
        <name>AMP</name>
        <dbReference type="ChEBI" id="CHEBI:456215"/>
    </ligand>
</feature>
<feature type="binding site" evidence="1">
    <location>
        <begin position="197"/>
        <end position="201"/>
    </location>
    <ligand>
        <name>UMP</name>
        <dbReference type="ChEBI" id="CHEBI:57865"/>
    </ligand>
</feature>
<feature type="mutagenesis site" description="Does not affect expression; when associated with A-199. Does not affect interaction with U6 RNA; when associated with A-199. Does not restore U6 processing when overexpressed in usb1 knockout cell; when associated with A-199. Impairs pre-mRNA splicing when overexpressed in usb1 knockout cell; when associated with A-199. Impairs cell growth when overexpressed in usb1 knockout cell; when associated with A-199." evidence="4">
    <original>H</original>
    <variation>A</variation>
    <location>
        <position position="109"/>
    </location>
</feature>
<feature type="mutagenesis site" description="Does not affect expression; when associated with A-109. Does not affect interaction with U6 RNA; when associated with A-109. Does not restore U6 processing when overexpressed in usb1 knockout cell; when associated with A-199. Impairs pre-mRNA splicing when overexpressed in usb1 knockout cell; when associated with A-199. Impairs cell growth when overexpressed in usb1 knockout cell; when associated with A-199." evidence="4">
    <original>H</original>
    <variation>A</variation>
    <location>
        <position position="199"/>
    </location>
</feature>
<keyword id="KW-0378">Hydrolase</keyword>
<keyword id="KW-0456">Lyase</keyword>
<keyword id="KW-0540">Nuclease</keyword>
<keyword id="KW-0539">Nucleus</keyword>
<keyword id="KW-1185">Reference proteome</keyword>
<comment type="function">
    <text evidence="4 5">3'-5' RNA exonuclease that trims the 3' end of oligo(U) tracts of the pre-U6 small nuclear RNA (snRNA) molecule, leading to the formation of a U6 snRNA 3' end-terminated with a 2',3'-cyclic phosphate.d (PubMed:26213367). Participates in the U6 snRNA 3' end processing that prevents U6 snRNA degradation (PubMed:23022480, PubMed:26213367).</text>
</comment>
<comment type="catalytic activity">
    <reaction evidence="5">
        <text>a 3'-end uridylyl-uridine-RNA = a 3'-end 2',3'-cyclophospho-uridine-RNA + uridine</text>
        <dbReference type="Rhea" id="RHEA:46052"/>
        <dbReference type="Rhea" id="RHEA-COMP:17384"/>
        <dbReference type="Rhea" id="RHEA-COMP:17385"/>
        <dbReference type="ChEBI" id="CHEBI:16704"/>
        <dbReference type="ChEBI" id="CHEBI:85643"/>
        <dbReference type="ChEBI" id="CHEBI:85644"/>
    </reaction>
    <physiologicalReaction direction="left-to-right" evidence="8">
        <dbReference type="Rhea" id="RHEA:46053"/>
    </physiologicalReaction>
</comment>
<comment type="subcellular location">
    <subcellularLocation>
        <location evidence="2 4">Nucleus</location>
    </subcellularLocation>
</comment>
<comment type="disruption phenotype">
    <text evidence="4">Deletion of mpn1 decreases cell population growth at low temperature and leads to a generalized pre-mRNA splicing defect, decrease of mature U6 snRNA levels, abnormal U6 snRNA 3'-end processing, decrease levels of U4/U6 di-snRNPs.</text>
</comment>
<comment type="similarity">
    <text evidence="2">Belongs to the 2H phosphoesterase superfamily. USB1 family.</text>
</comment>
<sequence length="265" mass="31600">MSLVCYESSSSGEDDDETISDNPRMLKVPKLQESFHELYKKKPKTFDSPEFHEGRIRGQKHIEGLWFVQTYLEVDLSKKVKKGIREFLNSQSRFQSLLCSEHNVPRRLHLSISENYRINYSTKNQLVHKWEQYTNNLNYRTLKFRLGKMCLLFNDEKTRMFLAFECKFSDENYKDLISHASDCMKEFTNRNLREDFLLHISFASSLTNEDEYQNWVSQDRESHFFKTMNEIINTKIQKDQFSESFIVDSLKLSIGHLIFTFPFCK</sequence>
<name>USB1_SCHPO</name>
<protein>
    <recommendedName>
        <fullName evidence="7">U6 snRNA phosphodiesterase 1</fullName>
    </recommendedName>
    <alternativeName>
        <fullName evidence="8">3'-5' RNA exonuclease USB1</fullName>
        <ecNumber evidence="5">4.6.1.-</ecNumber>
    </alternativeName>
    <alternativeName>
        <fullName evidence="6">Mutated in Poikiloderma with Neutropenia protein 1</fullName>
    </alternativeName>
</protein>
<dbReference type="EC" id="4.6.1.-" evidence="5"/>
<dbReference type="EMBL" id="CU329670">
    <property type="protein sequence ID" value="CAB11163.2"/>
    <property type="molecule type" value="Genomic_DNA"/>
</dbReference>
<dbReference type="PIR" id="T38248">
    <property type="entry name" value="T38248"/>
</dbReference>
<dbReference type="RefSeq" id="NP_593641.2">
    <property type="nucleotide sequence ID" value="NM_001019072.1"/>
</dbReference>
<dbReference type="SMR" id="O13915"/>
<dbReference type="BioGRID" id="278539">
    <property type="interactions" value="4"/>
</dbReference>
<dbReference type="FunCoup" id="O13915">
    <property type="interactions" value="283"/>
</dbReference>
<dbReference type="STRING" id="284812.O13915"/>
<dbReference type="iPTMnet" id="O13915"/>
<dbReference type="PaxDb" id="4896-SPAC23C11.10.1"/>
<dbReference type="EnsemblFungi" id="SPAC23C11.10.1">
    <property type="protein sequence ID" value="SPAC23C11.10.1:pep"/>
    <property type="gene ID" value="SPAC23C11.10"/>
</dbReference>
<dbReference type="GeneID" id="2542061"/>
<dbReference type="KEGG" id="spo:2542061"/>
<dbReference type="PomBase" id="SPAC23C11.10"/>
<dbReference type="VEuPathDB" id="FungiDB:SPAC23C11.10"/>
<dbReference type="eggNOG" id="KOG3102">
    <property type="taxonomic scope" value="Eukaryota"/>
</dbReference>
<dbReference type="HOGENOM" id="CLU_1050353_0_0_1"/>
<dbReference type="InParanoid" id="O13915"/>
<dbReference type="OMA" id="WAVQIYL"/>
<dbReference type="PhylomeDB" id="O13915"/>
<dbReference type="PRO" id="PR:O13915"/>
<dbReference type="Proteomes" id="UP000002485">
    <property type="component" value="Chromosome I"/>
</dbReference>
<dbReference type="GO" id="GO:0005634">
    <property type="term" value="C:nucleus"/>
    <property type="evidence" value="ECO:0000314"/>
    <property type="project" value="PomBase"/>
</dbReference>
<dbReference type="GO" id="GO:0000175">
    <property type="term" value="F:3'-5'-RNA exonuclease activity"/>
    <property type="evidence" value="ECO:0000318"/>
    <property type="project" value="GO_Central"/>
</dbReference>
<dbReference type="GO" id="GO:0016829">
    <property type="term" value="F:lyase activity"/>
    <property type="evidence" value="ECO:0007669"/>
    <property type="project" value="UniProtKB-KW"/>
</dbReference>
<dbReference type="GO" id="GO:1990838">
    <property type="term" value="F:poly(U)-specific exoribonuclease activity, producing 3' uridine cyclic phosphate ends"/>
    <property type="evidence" value="ECO:0000316"/>
    <property type="project" value="PomBase"/>
</dbReference>
<dbReference type="GO" id="GO:0034477">
    <property type="term" value="P:U6 snRNA 3'-end processing"/>
    <property type="evidence" value="ECO:0000315"/>
    <property type="project" value="PomBase"/>
</dbReference>
<dbReference type="Gene3D" id="3.90.1140.10">
    <property type="entry name" value="Cyclic phosphodiesterase"/>
    <property type="match status" value="1"/>
</dbReference>
<dbReference type="HAMAP" id="MF_03040">
    <property type="entry name" value="USB1"/>
    <property type="match status" value="1"/>
</dbReference>
<dbReference type="InterPro" id="IPR027521">
    <property type="entry name" value="Usb1"/>
</dbReference>
<dbReference type="PANTHER" id="PTHR13522">
    <property type="entry name" value="U6 SNRNA PHOSPHODIESTERASE 1"/>
    <property type="match status" value="1"/>
</dbReference>
<dbReference type="PANTHER" id="PTHR13522:SF3">
    <property type="entry name" value="U6 SNRNA PHOSPHODIESTERASE 1"/>
    <property type="match status" value="1"/>
</dbReference>
<dbReference type="Pfam" id="PF09749">
    <property type="entry name" value="HVSL"/>
    <property type="match status" value="1"/>
</dbReference>
<organism>
    <name type="scientific">Schizosaccharomyces pombe (strain 972 / ATCC 24843)</name>
    <name type="common">Fission yeast</name>
    <dbReference type="NCBI Taxonomy" id="284812"/>
    <lineage>
        <taxon>Eukaryota</taxon>
        <taxon>Fungi</taxon>
        <taxon>Dikarya</taxon>
        <taxon>Ascomycota</taxon>
        <taxon>Taphrinomycotina</taxon>
        <taxon>Schizosaccharomycetes</taxon>
        <taxon>Schizosaccharomycetales</taxon>
        <taxon>Schizosaccharomycetaceae</taxon>
        <taxon>Schizosaccharomyces</taxon>
    </lineage>
</organism>
<accession>O13915</accession>